<protein>
    <recommendedName>
        <fullName evidence="1">UPF0354 protein SSP1020</fullName>
    </recommendedName>
</protein>
<name>Y1020_STAS1</name>
<comment type="similarity">
    <text evidence="1">Belongs to the UPF0354 family.</text>
</comment>
<proteinExistence type="inferred from homology"/>
<evidence type="ECO:0000255" key="1">
    <source>
        <dbReference type="HAMAP-Rule" id="MF_01548"/>
    </source>
</evidence>
<reference key="1">
    <citation type="journal article" date="2005" name="Proc. Natl. Acad. Sci. U.S.A.">
        <title>Whole genome sequence of Staphylococcus saprophyticus reveals the pathogenesis of uncomplicated urinary tract infection.</title>
        <authorList>
            <person name="Kuroda M."/>
            <person name="Yamashita A."/>
            <person name="Hirakawa H."/>
            <person name="Kumano M."/>
            <person name="Morikawa K."/>
            <person name="Higashide M."/>
            <person name="Maruyama A."/>
            <person name="Inose Y."/>
            <person name="Matoba K."/>
            <person name="Toh H."/>
            <person name="Kuhara S."/>
            <person name="Hattori M."/>
            <person name="Ohta T."/>
        </authorList>
    </citation>
    <scope>NUCLEOTIDE SEQUENCE [LARGE SCALE GENOMIC DNA]</scope>
    <source>
        <strain>ATCC 15305 / DSM 20229 / NCIMB 8711 / NCTC 7292 / S-41</strain>
    </source>
</reference>
<dbReference type="EMBL" id="AP008934">
    <property type="protein sequence ID" value="BAE18165.1"/>
    <property type="molecule type" value="Genomic_DNA"/>
</dbReference>
<dbReference type="RefSeq" id="WP_002483000.1">
    <property type="nucleotide sequence ID" value="NZ_MTGA01000033.1"/>
</dbReference>
<dbReference type="GeneID" id="3615714"/>
<dbReference type="KEGG" id="ssp:SSP1020"/>
<dbReference type="PATRIC" id="fig|342451.11.peg.1019"/>
<dbReference type="eggNOG" id="COG4848">
    <property type="taxonomic scope" value="Bacteria"/>
</dbReference>
<dbReference type="HOGENOM" id="CLU_085634_0_0_9"/>
<dbReference type="OrthoDB" id="154553at2"/>
<dbReference type="Proteomes" id="UP000006371">
    <property type="component" value="Chromosome"/>
</dbReference>
<dbReference type="HAMAP" id="MF_01548">
    <property type="entry name" value="UPF0354"/>
    <property type="match status" value="1"/>
</dbReference>
<dbReference type="InterPro" id="IPR010838">
    <property type="entry name" value="DUF1444"/>
</dbReference>
<dbReference type="NCBIfam" id="NF010189">
    <property type="entry name" value="PRK13668.1"/>
    <property type="match status" value="1"/>
</dbReference>
<dbReference type="Pfam" id="PF07285">
    <property type="entry name" value="DUF1444"/>
    <property type="match status" value="1"/>
</dbReference>
<dbReference type="PIRSF" id="PIRSF012562">
    <property type="entry name" value="UCP012562"/>
    <property type="match status" value="1"/>
</dbReference>
<sequence length="287" mass="33220">MNVFQMRDKLKDRLNHLDVKFSFNREDETLRISRIDNGKGVTVKINPIVAKYKSQKEKIVDEIVYYVEEAVEQMKGEALENTDNIQIMPVLRSPSFDKKDKNGNSFVIDAHTAETNIYYAVDLGKSYRLIDEAMLEELKLTKQQLKEMALFNVRKLENKYTTDEVKGNIFYFVNSNDGYDASRILNTSFLNEIQAQCEGEMLVAVPHQDVLIIADIRNKTGYDVMAHLTMEFFTKGLVPITSLSLGYDKGHFEPIFILGKNNKQKRDPNVIQRLEATRKQYENKDKK</sequence>
<accession>Q49YH4</accession>
<keyword id="KW-1185">Reference proteome</keyword>
<organism>
    <name type="scientific">Staphylococcus saprophyticus subsp. saprophyticus (strain ATCC 15305 / DSM 20229 / NCIMB 8711 / NCTC 7292 / S-41)</name>
    <dbReference type="NCBI Taxonomy" id="342451"/>
    <lineage>
        <taxon>Bacteria</taxon>
        <taxon>Bacillati</taxon>
        <taxon>Bacillota</taxon>
        <taxon>Bacilli</taxon>
        <taxon>Bacillales</taxon>
        <taxon>Staphylococcaceae</taxon>
        <taxon>Staphylococcus</taxon>
    </lineage>
</organism>
<gene>
    <name type="ordered locus">SSP1020</name>
</gene>
<feature type="chain" id="PRO_0000171116" description="UPF0354 protein SSP1020">
    <location>
        <begin position="1"/>
        <end position="287"/>
    </location>
</feature>